<organism>
    <name type="scientific">Homo sapiens</name>
    <name type="common">Human</name>
    <dbReference type="NCBI Taxonomy" id="9606"/>
    <lineage>
        <taxon>Eukaryota</taxon>
        <taxon>Metazoa</taxon>
        <taxon>Chordata</taxon>
        <taxon>Craniata</taxon>
        <taxon>Vertebrata</taxon>
        <taxon>Euteleostomi</taxon>
        <taxon>Mammalia</taxon>
        <taxon>Eutheria</taxon>
        <taxon>Euarchontoglires</taxon>
        <taxon>Primates</taxon>
        <taxon>Haplorrhini</taxon>
        <taxon>Catarrhini</taxon>
        <taxon>Hominidae</taxon>
        <taxon>Homo</taxon>
    </lineage>
</organism>
<protein>
    <recommendedName>
        <fullName>Sorting nexin-11</fullName>
    </recommendedName>
</protein>
<comment type="function">
    <text evidence="3 4">Phosphoinositide-binding protein involved in protein sorting and membrane trafficking in endosomes (PubMed:23615901). Regulates the levels of TRPV3 by promoting its trafficking from the cell membrane to lysosome for degradation (PubMed:26818531).</text>
</comment>
<comment type="subunit">
    <text evidence="3 4">Monomer (PubMed:23615901). Interacts with TRPV3; this interaction promotes TRPV3 trafficking from the cell membrane to lysosome for degradation (PubMed:26818531).</text>
</comment>
<comment type="interaction">
    <interactant intactId="EBI-10329449">
        <id>Q9Y5W9</id>
    </interactant>
    <interactant intactId="EBI-714543">
        <id>Q15041</id>
        <label>ARL6IP1</label>
    </interactant>
    <organismsDiffer>false</organismsDiffer>
    <experiments>6</experiments>
</comment>
<comment type="interaction">
    <interactant intactId="EBI-10329449">
        <id>Q9Y5W9</id>
    </interactant>
    <interactant intactId="EBI-18015780">
        <id>Q3KP22-3</id>
        <label>MAJIN</label>
    </interactant>
    <organismsDiffer>false</organismsDiffer>
    <experiments>3</experiments>
</comment>
<comment type="interaction">
    <interactant intactId="EBI-10329449">
        <id>Q9Y5W9</id>
    </interactant>
    <interactant intactId="EBI-11956853">
        <id>Q8N987</id>
        <label>NECAB1</label>
    </interactant>
    <organismsDiffer>false</organismsDiffer>
    <experiments>3</experiments>
</comment>
<comment type="interaction">
    <interactant intactId="EBI-10329449">
        <id>Q9Y5W9</id>
    </interactant>
    <interactant intactId="EBI-712367">
        <id>Q9UI14</id>
        <label>RABAC1</label>
    </interactant>
    <organismsDiffer>false</organismsDiffer>
    <experiments>6</experiments>
</comment>
<comment type="interaction">
    <interactant intactId="EBI-10329449">
        <id>Q9Y5W9</id>
    </interactant>
    <interactant intactId="EBI-14065960">
        <id>Q96HR9-2</id>
        <label>REEP6</label>
    </interactant>
    <organismsDiffer>false</organismsDiffer>
    <experiments>3</experiments>
</comment>
<comment type="interaction">
    <interactant intactId="EBI-10329449">
        <id>Q9Y5W9</id>
    </interactant>
    <interactant intactId="EBI-1052363">
        <id>Q9NS64</id>
        <label>RPRM</label>
    </interactant>
    <organismsDiffer>false</organismsDiffer>
    <experiments>3</experiments>
</comment>
<comment type="interaction">
    <interactant intactId="EBI-10329449">
        <id>Q9Y5W9</id>
    </interactant>
    <interactant intactId="EBI-8463848">
        <id>Q8NB12</id>
        <label>SMYD1</label>
    </interactant>
    <organismsDiffer>false</organismsDiffer>
    <experiments>3</experiments>
</comment>
<comment type="interaction">
    <interactant intactId="EBI-10329449">
        <id>Q9Y5W9</id>
    </interactant>
    <interactant intactId="EBI-1055671">
        <id>Q9NRG4</id>
        <label>SMYD2</label>
    </interactant>
    <organismsDiffer>false</organismsDiffer>
    <experiments>3</experiments>
</comment>
<comment type="interaction">
    <interactant intactId="EBI-10329449">
        <id>Q9Y5W9</id>
    </interactant>
    <interactant intactId="EBI-2799703">
        <id>O95070</id>
        <label>YIF1A</label>
    </interactant>
    <organismsDiffer>false</organismsDiffer>
    <experiments>3</experiments>
</comment>
<comment type="interaction">
    <interactant intactId="EBI-10329449">
        <id>Q9Y5W9</id>
    </interactant>
    <interactant intactId="EBI-747061">
        <id>O75800</id>
        <label>ZMYND10</label>
    </interactant>
    <organismsDiffer>false</organismsDiffer>
    <experiments>3</experiments>
</comment>
<comment type="subcellular location">
    <subcellularLocation>
        <location evidence="4">Cell membrane</location>
        <topology evidence="6">Peripheral membrane protein</topology>
        <orientation evidence="6">Cytoplasmic side</orientation>
    </subcellularLocation>
    <subcellularLocation>
        <location evidence="3">Endosome</location>
    </subcellularLocation>
    <subcellularLocation>
        <location evidence="4">Cytoplasm</location>
    </subcellularLocation>
</comment>
<comment type="alternative products">
    <event type="alternative splicing"/>
    <isoform>
        <id>Q9Y5W9-1</id>
        <name>1</name>
        <sequence type="displayed"/>
    </isoform>
    <isoform>
        <id>Q9Y5W9-2</id>
        <name>2</name>
        <sequence type="described" ref="VSP_056594"/>
    </isoform>
</comment>
<comment type="domain">
    <text evidence="3">The PX domain mediates interaction with membranes enriched in phosphatidylinositol 3-phosphate.</text>
</comment>
<comment type="similarity">
    <text evidence="6">Belongs to the sorting nexin family.</text>
</comment>
<comment type="sequence caution" evidence="6">
    <conflict type="erroneous initiation">
        <sequence resource="EMBL-CDS" id="AAD27834"/>
    </conflict>
    <text>Truncated N-terminus.</text>
</comment>
<keyword id="KW-0002">3D-structure</keyword>
<keyword id="KW-0025">Alternative splicing</keyword>
<keyword id="KW-1003">Cell membrane</keyword>
<keyword id="KW-0963">Cytoplasm</keyword>
<keyword id="KW-0967">Endosome</keyword>
<keyword id="KW-0446">Lipid-binding</keyword>
<keyword id="KW-0472">Membrane</keyword>
<keyword id="KW-0653">Protein transport</keyword>
<keyword id="KW-1267">Proteomics identification</keyword>
<keyword id="KW-1185">Reference proteome</keyword>
<keyword id="KW-0813">Transport</keyword>
<dbReference type="EMBL" id="AF121861">
    <property type="protein sequence ID" value="AAD27834.1"/>
    <property type="status" value="ALT_INIT"/>
    <property type="molecule type" value="mRNA"/>
</dbReference>
<dbReference type="EMBL" id="BT006723">
    <property type="protein sequence ID" value="AAP35369.1"/>
    <property type="molecule type" value="mRNA"/>
</dbReference>
<dbReference type="EMBL" id="AK023932">
    <property type="protein sequence ID" value="BAB14732.1"/>
    <property type="molecule type" value="mRNA"/>
</dbReference>
<dbReference type="EMBL" id="AK091852">
    <property type="protein sequence ID" value="BAG52428.1"/>
    <property type="molecule type" value="mRNA"/>
</dbReference>
<dbReference type="EMBL" id="AK298551">
    <property type="protein sequence ID" value="BAG60747.1"/>
    <property type="molecule type" value="mRNA"/>
</dbReference>
<dbReference type="EMBL" id="AK316374">
    <property type="protein sequence ID" value="BAH14745.1"/>
    <property type="molecule type" value="mRNA"/>
</dbReference>
<dbReference type="EMBL" id="AC006468">
    <property type="status" value="NOT_ANNOTATED_CDS"/>
    <property type="molecule type" value="Genomic_DNA"/>
</dbReference>
<dbReference type="EMBL" id="CH471109">
    <property type="protein sequence ID" value="EAW94754.1"/>
    <property type="molecule type" value="Genomic_DNA"/>
</dbReference>
<dbReference type="EMBL" id="BC000768">
    <property type="protein sequence ID" value="AAH00768.1"/>
    <property type="molecule type" value="mRNA"/>
</dbReference>
<dbReference type="EMBL" id="BC103721">
    <property type="protein sequence ID" value="AAI03722.1"/>
    <property type="molecule type" value="mRNA"/>
</dbReference>
<dbReference type="CCDS" id="CCDS11526.1">
    <molecule id="Q9Y5W9-1"/>
</dbReference>
<dbReference type="CCDS" id="CCDS82152.1">
    <molecule id="Q9Y5W9-2"/>
</dbReference>
<dbReference type="RefSeq" id="NP_001317249.1">
    <molecule id="Q9Y5W9-2"/>
    <property type="nucleotide sequence ID" value="NM_001330320.2"/>
</dbReference>
<dbReference type="RefSeq" id="NP_037455.2">
    <molecule id="Q9Y5W9-1"/>
    <property type="nucleotide sequence ID" value="NM_013323.2"/>
</dbReference>
<dbReference type="RefSeq" id="NP_689450.1">
    <molecule id="Q9Y5W9-1"/>
    <property type="nucleotide sequence ID" value="NM_152244.2"/>
</dbReference>
<dbReference type="RefSeq" id="XP_005257317.1">
    <molecule id="Q9Y5W9-1"/>
    <property type="nucleotide sequence ID" value="XM_005257260.4"/>
</dbReference>
<dbReference type="RefSeq" id="XP_005257319.1">
    <molecule id="Q9Y5W9-2"/>
    <property type="nucleotide sequence ID" value="XM_005257262.4"/>
</dbReference>
<dbReference type="RefSeq" id="XP_011522999.1">
    <molecule id="Q9Y5W9-1"/>
    <property type="nucleotide sequence ID" value="XM_011524697.3"/>
</dbReference>
<dbReference type="RefSeq" id="XP_047291829.1">
    <molecule id="Q9Y5W9-2"/>
    <property type="nucleotide sequence ID" value="XM_047435873.1"/>
</dbReference>
<dbReference type="RefSeq" id="XP_054171859.1">
    <molecule id="Q9Y5W9-1"/>
    <property type="nucleotide sequence ID" value="XM_054315884.1"/>
</dbReference>
<dbReference type="RefSeq" id="XP_054171860.1">
    <molecule id="Q9Y5W9-1"/>
    <property type="nucleotide sequence ID" value="XM_054315885.1"/>
</dbReference>
<dbReference type="RefSeq" id="XP_054171861.1">
    <molecule id="Q9Y5W9-2"/>
    <property type="nucleotide sequence ID" value="XM_054315886.1"/>
</dbReference>
<dbReference type="RefSeq" id="XP_054171862.1">
    <molecule id="Q9Y5W9-2"/>
    <property type="nucleotide sequence ID" value="XM_054315887.1"/>
</dbReference>
<dbReference type="PDB" id="4IKB">
    <property type="method" value="X-ray"/>
    <property type="resolution" value="1.78 A"/>
    <property type="chains" value="A/B=7-142"/>
</dbReference>
<dbReference type="PDB" id="4IKD">
    <property type="method" value="X-ray"/>
    <property type="resolution" value="1.60 A"/>
    <property type="chains" value="A=7-170"/>
</dbReference>
<dbReference type="PDB" id="6KOI">
    <property type="method" value="X-ray"/>
    <property type="resolution" value="3.50 A"/>
    <property type="chains" value="A/B/C/D/E/F/G/H/I/J/K/L/M/N/O/P/Q/R/S/T/U/V/W/X=7-158"/>
</dbReference>
<dbReference type="PDB" id="6KOJ">
    <property type="method" value="X-ray"/>
    <property type="resolution" value="2.14 A"/>
    <property type="chains" value="A/B=7-142"/>
</dbReference>
<dbReference type="PDB" id="6KOK">
    <property type="method" value="X-ray"/>
    <property type="resolution" value="2.00 A"/>
    <property type="chains" value="A/B=7-139"/>
</dbReference>
<dbReference type="PDBsum" id="4IKB"/>
<dbReference type="PDBsum" id="4IKD"/>
<dbReference type="PDBsum" id="6KOI"/>
<dbReference type="PDBsum" id="6KOJ"/>
<dbReference type="PDBsum" id="6KOK"/>
<dbReference type="SMR" id="Q9Y5W9"/>
<dbReference type="BioGRID" id="118960">
    <property type="interactions" value="39"/>
</dbReference>
<dbReference type="FunCoup" id="Q9Y5W9">
    <property type="interactions" value="585"/>
</dbReference>
<dbReference type="IntAct" id="Q9Y5W9">
    <property type="interactions" value="30"/>
</dbReference>
<dbReference type="STRING" id="9606.ENSP00000377059"/>
<dbReference type="TCDB" id="3.A.34.1.1">
    <property type="family name" value="the sorting nexins of the escrt complexes (sn-escrt)"/>
</dbReference>
<dbReference type="iPTMnet" id="Q9Y5W9"/>
<dbReference type="MetOSite" id="Q9Y5W9"/>
<dbReference type="PhosphoSitePlus" id="Q9Y5W9"/>
<dbReference type="SwissPalm" id="Q9Y5W9"/>
<dbReference type="BioMuta" id="SNX11"/>
<dbReference type="DMDM" id="14916716"/>
<dbReference type="jPOST" id="Q9Y5W9"/>
<dbReference type="MassIVE" id="Q9Y5W9"/>
<dbReference type="PaxDb" id="9606-ENSP00000377059"/>
<dbReference type="PeptideAtlas" id="Q9Y5W9"/>
<dbReference type="ProteomicsDB" id="86524">
    <molecule id="Q9Y5W9-1"/>
</dbReference>
<dbReference type="Pumba" id="Q9Y5W9"/>
<dbReference type="Antibodypedia" id="30244">
    <property type="antibodies" value="133 antibodies from 21 providers"/>
</dbReference>
<dbReference type="DNASU" id="29916"/>
<dbReference type="Ensembl" id="ENST00000359238.7">
    <molecule id="Q9Y5W9-1"/>
    <property type="protein sequence ID" value="ENSP00000352175.2"/>
    <property type="gene ID" value="ENSG00000002919.15"/>
</dbReference>
<dbReference type="Ensembl" id="ENST00000393405.6">
    <molecule id="Q9Y5W9-1"/>
    <property type="protein sequence ID" value="ENSP00000377059.2"/>
    <property type="gene ID" value="ENSG00000002919.15"/>
</dbReference>
<dbReference type="Ensembl" id="ENST00000580219.5">
    <molecule id="Q9Y5W9-2"/>
    <property type="protein sequence ID" value="ENSP00000462188.1"/>
    <property type="gene ID" value="ENSG00000002919.15"/>
</dbReference>
<dbReference type="Ensembl" id="ENST00000582104.5">
    <molecule id="Q9Y5W9-2"/>
    <property type="protein sequence ID" value="ENSP00000463948.1"/>
    <property type="gene ID" value="ENSG00000002919.15"/>
</dbReference>
<dbReference type="GeneID" id="29916"/>
<dbReference type="KEGG" id="hsa:29916"/>
<dbReference type="MANE-Select" id="ENST00000359238.7">
    <property type="protein sequence ID" value="ENSP00000352175.2"/>
    <property type="RefSeq nucleotide sequence ID" value="NM_013323.3"/>
    <property type="RefSeq protein sequence ID" value="NP_037455.2"/>
</dbReference>
<dbReference type="UCSC" id="uc002inf.2">
    <molecule id="Q9Y5W9-1"/>
    <property type="organism name" value="human"/>
</dbReference>
<dbReference type="AGR" id="HGNC:14975"/>
<dbReference type="CTD" id="29916"/>
<dbReference type="DisGeNET" id="29916"/>
<dbReference type="GeneCards" id="SNX11"/>
<dbReference type="HGNC" id="HGNC:14975">
    <property type="gene designation" value="SNX11"/>
</dbReference>
<dbReference type="HPA" id="ENSG00000002919">
    <property type="expression patterns" value="Low tissue specificity"/>
</dbReference>
<dbReference type="MIM" id="614906">
    <property type="type" value="gene"/>
</dbReference>
<dbReference type="neXtProt" id="NX_Q9Y5W9"/>
<dbReference type="OpenTargets" id="ENSG00000002919"/>
<dbReference type="PharmGKB" id="PA37951"/>
<dbReference type="VEuPathDB" id="HostDB:ENSG00000002919"/>
<dbReference type="eggNOG" id="KOG2527">
    <property type="taxonomic scope" value="Eukaryota"/>
</dbReference>
<dbReference type="GeneTree" id="ENSGT00940000160113"/>
<dbReference type="InParanoid" id="Q9Y5W9"/>
<dbReference type="OMA" id="SCCFIRR"/>
<dbReference type="OrthoDB" id="5227681at2759"/>
<dbReference type="PAN-GO" id="Q9Y5W9">
    <property type="GO annotations" value="3 GO annotations based on evolutionary models"/>
</dbReference>
<dbReference type="PhylomeDB" id="Q9Y5W9"/>
<dbReference type="TreeFam" id="TF332117"/>
<dbReference type="PathwayCommons" id="Q9Y5W9"/>
<dbReference type="SignaLink" id="Q9Y5W9"/>
<dbReference type="BioGRID-ORCS" id="29916">
    <property type="hits" value="13 hits in 1156 CRISPR screens"/>
</dbReference>
<dbReference type="ChiTaRS" id="SNX11">
    <property type="organism name" value="human"/>
</dbReference>
<dbReference type="EvolutionaryTrace" id="Q9Y5W9"/>
<dbReference type="GenomeRNAi" id="29916"/>
<dbReference type="Pharos" id="Q9Y5W9">
    <property type="development level" value="Tbio"/>
</dbReference>
<dbReference type="PRO" id="PR:Q9Y5W9"/>
<dbReference type="Proteomes" id="UP000005640">
    <property type="component" value="Chromosome 17"/>
</dbReference>
<dbReference type="RNAct" id="Q9Y5W9">
    <property type="molecule type" value="protein"/>
</dbReference>
<dbReference type="Bgee" id="ENSG00000002919">
    <property type="expression patterns" value="Expressed in oral epithelium and 182 other cell types or tissues"/>
</dbReference>
<dbReference type="ExpressionAtlas" id="Q9Y5W9">
    <property type="expression patterns" value="baseline and differential"/>
</dbReference>
<dbReference type="GO" id="GO:0005737">
    <property type="term" value="C:cytoplasm"/>
    <property type="evidence" value="ECO:0000314"/>
    <property type="project" value="UniProtKB"/>
</dbReference>
<dbReference type="GO" id="GO:0005768">
    <property type="term" value="C:endosome"/>
    <property type="evidence" value="ECO:0000314"/>
    <property type="project" value="UniProtKB"/>
</dbReference>
<dbReference type="GO" id="GO:0005886">
    <property type="term" value="C:plasma membrane"/>
    <property type="evidence" value="ECO:0000314"/>
    <property type="project" value="UniProtKB"/>
</dbReference>
<dbReference type="GO" id="GO:1901981">
    <property type="term" value="F:phosphatidylinositol phosphate binding"/>
    <property type="evidence" value="ECO:0000314"/>
    <property type="project" value="UniProtKB"/>
</dbReference>
<dbReference type="GO" id="GO:0006886">
    <property type="term" value="P:intracellular protein transport"/>
    <property type="evidence" value="ECO:0007669"/>
    <property type="project" value="InterPro"/>
</dbReference>
<dbReference type="GO" id="GO:0016050">
    <property type="term" value="P:vesicle organization"/>
    <property type="evidence" value="ECO:0000315"/>
    <property type="project" value="UniProtKB"/>
</dbReference>
<dbReference type="CDD" id="cd06898">
    <property type="entry name" value="PX_SNX10"/>
    <property type="match status" value="1"/>
</dbReference>
<dbReference type="FunFam" id="3.30.1520.10:FF:000012">
    <property type="entry name" value="Sorting nexin 10"/>
    <property type="match status" value="1"/>
</dbReference>
<dbReference type="Gene3D" id="3.30.1520.10">
    <property type="entry name" value="Phox-like domain"/>
    <property type="match status" value="1"/>
</dbReference>
<dbReference type="InterPro" id="IPR001683">
    <property type="entry name" value="PX_dom"/>
</dbReference>
<dbReference type="InterPro" id="IPR036871">
    <property type="entry name" value="PX_dom_sf"/>
</dbReference>
<dbReference type="InterPro" id="IPR043544">
    <property type="entry name" value="SNX10/11"/>
</dbReference>
<dbReference type="PANTHER" id="PTHR46209">
    <property type="entry name" value="PX DOMAIN-CONTAINING PROTEIN"/>
    <property type="match status" value="1"/>
</dbReference>
<dbReference type="PANTHER" id="PTHR46209:SF1">
    <property type="entry name" value="SORTING NEXIN-11"/>
    <property type="match status" value="1"/>
</dbReference>
<dbReference type="Pfam" id="PF00787">
    <property type="entry name" value="PX"/>
    <property type="match status" value="1"/>
</dbReference>
<dbReference type="SMART" id="SM00312">
    <property type="entry name" value="PX"/>
    <property type="match status" value="1"/>
</dbReference>
<dbReference type="SUPFAM" id="SSF64268">
    <property type="entry name" value="PX domain"/>
    <property type="match status" value="1"/>
</dbReference>
<dbReference type="PROSITE" id="PS50195">
    <property type="entry name" value="PX"/>
    <property type="match status" value="1"/>
</dbReference>
<gene>
    <name type="primary">SNX11</name>
</gene>
<feature type="chain" id="PRO_0000213856" description="Sorting nexin-11">
    <location>
        <begin position="1"/>
        <end position="270"/>
    </location>
</feature>
<feature type="domain" description="PX" evidence="1">
    <location>
        <begin position="16"/>
        <end position="132"/>
    </location>
</feature>
<feature type="region of interest" description="Important for membrane trafficking" evidence="3">
    <location>
        <begin position="135"/>
        <end position="139"/>
    </location>
</feature>
<feature type="region of interest" description="Disordered" evidence="2">
    <location>
        <begin position="168"/>
        <end position="203"/>
    </location>
</feature>
<feature type="compositionally biased region" description="Basic and acidic residues" evidence="2">
    <location>
        <begin position="168"/>
        <end position="177"/>
    </location>
</feature>
<feature type="binding site" evidence="3">
    <location>
        <position position="59"/>
    </location>
    <ligand>
        <name>a 1,2-diacyl-sn-glycero-3-phospho-(1D-myo-inositol-3-phosphate)</name>
        <dbReference type="ChEBI" id="CHEBI:58088"/>
    </ligand>
</feature>
<feature type="binding site" evidence="3">
    <location>
        <position position="85"/>
    </location>
    <ligand>
        <name>a 1,2-diacyl-sn-glycero-3-phospho-(1D-myo-inositol-3-phosphate)</name>
        <dbReference type="ChEBI" id="CHEBI:58088"/>
    </ligand>
</feature>
<feature type="binding site" evidence="3">
    <location>
        <position position="99"/>
    </location>
    <ligand>
        <name>a 1,2-diacyl-sn-glycero-3-phospho-(1D-myo-inositol-3-phosphate)</name>
        <dbReference type="ChEBI" id="CHEBI:58088"/>
    </ligand>
</feature>
<feature type="splice variant" id="VSP_056594" description="In isoform 2." evidence="5">
    <original>MGFWCRMSENQEQE</original>
    <variation>MVCREQ</variation>
    <location>
        <begin position="1"/>
        <end position="14"/>
    </location>
</feature>
<feature type="mutagenesis site" description="Abolishes lipid-binding." evidence="3">
    <original>R</original>
    <variation>A</variation>
    <location>
        <position position="59"/>
    </location>
</feature>
<feature type="mutagenesis site" description="Impairs function in membrane trafficking." evidence="3">
    <original>IEACV</original>
    <variation>AAAAA</variation>
    <location>
        <begin position="135"/>
        <end position="139"/>
    </location>
</feature>
<feature type="strand" evidence="8">
    <location>
        <begin position="17"/>
        <end position="28"/>
    </location>
</feature>
<feature type="strand" evidence="8">
    <location>
        <begin position="35"/>
        <end position="44"/>
    </location>
</feature>
<feature type="strand" evidence="8">
    <location>
        <begin position="53"/>
        <end position="55"/>
    </location>
</feature>
<feature type="helix" evidence="8">
    <location>
        <begin position="60"/>
        <end position="67"/>
    </location>
</feature>
<feature type="helix" evidence="8">
    <location>
        <begin position="70"/>
        <end position="73"/>
    </location>
</feature>
<feature type="turn" evidence="9">
    <location>
        <begin position="74"/>
        <end position="76"/>
    </location>
</feature>
<feature type="strand" evidence="7">
    <location>
        <begin position="89"/>
        <end position="91"/>
    </location>
</feature>
<feature type="helix" evidence="8">
    <location>
        <begin position="92"/>
        <end position="97"/>
    </location>
</feature>
<feature type="helix" evidence="8">
    <location>
        <begin position="100"/>
        <end position="108"/>
    </location>
</feature>
<feature type="helix" evidence="8">
    <location>
        <begin position="114"/>
        <end position="117"/>
    </location>
</feature>
<feature type="helix" evidence="8">
    <location>
        <begin position="120"/>
        <end position="127"/>
    </location>
</feature>
<feature type="helix" evidence="8">
    <location>
        <begin position="132"/>
        <end position="139"/>
    </location>
</feature>
<feature type="strand" evidence="8">
    <location>
        <begin position="143"/>
        <end position="145"/>
    </location>
</feature>
<feature type="helix" evidence="8">
    <location>
        <begin position="147"/>
        <end position="156"/>
    </location>
</feature>
<reference key="1">
    <citation type="journal article" date="2001" name="Biochem. J.">
        <title>A large family of endosome-localized proteins related to sorting nexin 1.</title>
        <authorList>
            <person name="Teasdale R.D."/>
            <person name="Loci D."/>
            <person name="Houghton F."/>
            <person name="Karlsson L."/>
            <person name="Gleeson P.A."/>
        </authorList>
    </citation>
    <scope>NUCLEOTIDE SEQUENCE [MRNA] (ISOFORM 1)</scope>
</reference>
<reference key="2">
    <citation type="submission" date="2003-05" db="EMBL/GenBank/DDBJ databases">
        <title>Cloning of human full-length CDSs in BD Creator(TM) system donor vector.</title>
        <authorList>
            <person name="Kalnine N."/>
            <person name="Chen X."/>
            <person name="Rolfs A."/>
            <person name="Halleck A."/>
            <person name="Hines L."/>
            <person name="Eisenstein S."/>
            <person name="Koundinya M."/>
            <person name="Raphael J."/>
            <person name="Moreira D."/>
            <person name="Kelley T."/>
            <person name="LaBaer J."/>
            <person name="Lin Y."/>
            <person name="Phelan M."/>
            <person name="Farmer A."/>
        </authorList>
    </citation>
    <scope>NUCLEOTIDE SEQUENCE [LARGE SCALE MRNA] (ISOFORM 1)</scope>
</reference>
<reference key="3">
    <citation type="journal article" date="2004" name="Nat. Genet.">
        <title>Complete sequencing and characterization of 21,243 full-length human cDNAs.</title>
        <authorList>
            <person name="Ota T."/>
            <person name="Suzuki Y."/>
            <person name="Nishikawa T."/>
            <person name="Otsuki T."/>
            <person name="Sugiyama T."/>
            <person name="Irie R."/>
            <person name="Wakamatsu A."/>
            <person name="Hayashi K."/>
            <person name="Sato H."/>
            <person name="Nagai K."/>
            <person name="Kimura K."/>
            <person name="Makita H."/>
            <person name="Sekine M."/>
            <person name="Obayashi M."/>
            <person name="Nishi T."/>
            <person name="Shibahara T."/>
            <person name="Tanaka T."/>
            <person name="Ishii S."/>
            <person name="Yamamoto J."/>
            <person name="Saito K."/>
            <person name="Kawai Y."/>
            <person name="Isono Y."/>
            <person name="Nakamura Y."/>
            <person name="Nagahari K."/>
            <person name="Murakami K."/>
            <person name="Yasuda T."/>
            <person name="Iwayanagi T."/>
            <person name="Wagatsuma M."/>
            <person name="Shiratori A."/>
            <person name="Sudo H."/>
            <person name="Hosoiri T."/>
            <person name="Kaku Y."/>
            <person name="Kodaira H."/>
            <person name="Kondo H."/>
            <person name="Sugawara M."/>
            <person name="Takahashi M."/>
            <person name="Kanda K."/>
            <person name="Yokoi T."/>
            <person name="Furuya T."/>
            <person name="Kikkawa E."/>
            <person name="Omura Y."/>
            <person name="Abe K."/>
            <person name="Kamihara K."/>
            <person name="Katsuta N."/>
            <person name="Sato K."/>
            <person name="Tanikawa M."/>
            <person name="Yamazaki M."/>
            <person name="Ninomiya K."/>
            <person name="Ishibashi T."/>
            <person name="Yamashita H."/>
            <person name="Murakawa K."/>
            <person name="Fujimori K."/>
            <person name="Tanai H."/>
            <person name="Kimata M."/>
            <person name="Watanabe M."/>
            <person name="Hiraoka S."/>
            <person name="Chiba Y."/>
            <person name="Ishida S."/>
            <person name="Ono Y."/>
            <person name="Takiguchi S."/>
            <person name="Watanabe S."/>
            <person name="Yosida M."/>
            <person name="Hotuta T."/>
            <person name="Kusano J."/>
            <person name="Kanehori K."/>
            <person name="Takahashi-Fujii A."/>
            <person name="Hara H."/>
            <person name="Tanase T.-O."/>
            <person name="Nomura Y."/>
            <person name="Togiya S."/>
            <person name="Komai F."/>
            <person name="Hara R."/>
            <person name="Takeuchi K."/>
            <person name="Arita M."/>
            <person name="Imose N."/>
            <person name="Musashino K."/>
            <person name="Yuuki H."/>
            <person name="Oshima A."/>
            <person name="Sasaki N."/>
            <person name="Aotsuka S."/>
            <person name="Yoshikawa Y."/>
            <person name="Matsunawa H."/>
            <person name="Ichihara T."/>
            <person name="Shiohata N."/>
            <person name="Sano S."/>
            <person name="Moriya S."/>
            <person name="Momiyama H."/>
            <person name="Satoh N."/>
            <person name="Takami S."/>
            <person name="Terashima Y."/>
            <person name="Suzuki O."/>
            <person name="Nakagawa S."/>
            <person name="Senoh A."/>
            <person name="Mizoguchi H."/>
            <person name="Goto Y."/>
            <person name="Shimizu F."/>
            <person name="Wakebe H."/>
            <person name="Hishigaki H."/>
            <person name="Watanabe T."/>
            <person name="Sugiyama A."/>
            <person name="Takemoto M."/>
            <person name="Kawakami B."/>
            <person name="Yamazaki M."/>
            <person name="Watanabe K."/>
            <person name="Kumagai A."/>
            <person name="Itakura S."/>
            <person name="Fukuzumi Y."/>
            <person name="Fujimori Y."/>
            <person name="Komiyama M."/>
            <person name="Tashiro H."/>
            <person name="Tanigami A."/>
            <person name="Fujiwara T."/>
            <person name="Ono T."/>
            <person name="Yamada K."/>
            <person name="Fujii Y."/>
            <person name="Ozaki K."/>
            <person name="Hirao M."/>
            <person name="Ohmori Y."/>
            <person name="Kawabata A."/>
            <person name="Hikiji T."/>
            <person name="Kobatake N."/>
            <person name="Inagaki H."/>
            <person name="Ikema Y."/>
            <person name="Okamoto S."/>
            <person name="Okitani R."/>
            <person name="Kawakami T."/>
            <person name="Noguchi S."/>
            <person name="Itoh T."/>
            <person name="Shigeta K."/>
            <person name="Senba T."/>
            <person name="Matsumura K."/>
            <person name="Nakajima Y."/>
            <person name="Mizuno T."/>
            <person name="Morinaga M."/>
            <person name="Sasaki M."/>
            <person name="Togashi T."/>
            <person name="Oyama M."/>
            <person name="Hata H."/>
            <person name="Watanabe M."/>
            <person name="Komatsu T."/>
            <person name="Mizushima-Sugano J."/>
            <person name="Satoh T."/>
            <person name="Shirai Y."/>
            <person name="Takahashi Y."/>
            <person name="Nakagawa K."/>
            <person name="Okumura K."/>
            <person name="Nagase T."/>
            <person name="Nomura N."/>
            <person name="Kikuchi H."/>
            <person name="Masuho Y."/>
            <person name="Yamashita R."/>
            <person name="Nakai K."/>
            <person name="Yada T."/>
            <person name="Nakamura Y."/>
            <person name="Ohara O."/>
            <person name="Isogai T."/>
            <person name="Sugano S."/>
        </authorList>
    </citation>
    <scope>NUCLEOTIDE SEQUENCE [LARGE SCALE MRNA] (ISOFORMS 1 AND 2)</scope>
    <source>
        <tissue>Lung</tissue>
        <tissue>Testis</tissue>
        <tissue>Thyroid</tissue>
    </source>
</reference>
<reference key="4">
    <citation type="journal article" date="2006" name="Nature">
        <title>DNA sequence of human chromosome 17 and analysis of rearrangement in the human lineage.</title>
        <authorList>
            <person name="Zody M.C."/>
            <person name="Garber M."/>
            <person name="Adams D.J."/>
            <person name="Sharpe T."/>
            <person name="Harrow J."/>
            <person name="Lupski J.R."/>
            <person name="Nicholson C."/>
            <person name="Searle S.M."/>
            <person name="Wilming L."/>
            <person name="Young S.K."/>
            <person name="Abouelleil A."/>
            <person name="Allen N.R."/>
            <person name="Bi W."/>
            <person name="Bloom T."/>
            <person name="Borowsky M.L."/>
            <person name="Bugalter B.E."/>
            <person name="Butler J."/>
            <person name="Chang J.L."/>
            <person name="Chen C.-K."/>
            <person name="Cook A."/>
            <person name="Corum B."/>
            <person name="Cuomo C.A."/>
            <person name="de Jong P.J."/>
            <person name="DeCaprio D."/>
            <person name="Dewar K."/>
            <person name="FitzGerald M."/>
            <person name="Gilbert J."/>
            <person name="Gibson R."/>
            <person name="Gnerre S."/>
            <person name="Goldstein S."/>
            <person name="Grafham D.V."/>
            <person name="Grocock R."/>
            <person name="Hafez N."/>
            <person name="Hagopian D.S."/>
            <person name="Hart E."/>
            <person name="Norman C.H."/>
            <person name="Humphray S."/>
            <person name="Jaffe D.B."/>
            <person name="Jones M."/>
            <person name="Kamal M."/>
            <person name="Khodiyar V.K."/>
            <person name="LaButti K."/>
            <person name="Laird G."/>
            <person name="Lehoczky J."/>
            <person name="Liu X."/>
            <person name="Lokyitsang T."/>
            <person name="Loveland J."/>
            <person name="Lui A."/>
            <person name="Macdonald P."/>
            <person name="Major J.E."/>
            <person name="Matthews L."/>
            <person name="Mauceli E."/>
            <person name="McCarroll S.A."/>
            <person name="Mihalev A.H."/>
            <person name="Mudge J."/>
            <person name="Nguyen C."/>
            <person name="Nicol R."/>
            <person name="O'Leary S.B."/>
            <person name="Osoegawa K."/>
            <person name="Schwartz D.C."/>
            <person name="Shaw-Smith C."/>
            <person name="Stankiewicz P."/>
            <person name="Steward C."/>
            <person name="Swarbreck D."/>
            <person name="Venkataraman V."/>
            <person name="Whittaker C.A."/>
            <person name="Yang X."/>
            <person name="Zimmer A.R."/>
            <person name="Bradley A."/>
            <person name="Hubbard T."/>
            <person name="Birren B.W."/>
            <person name="Rogers J."/>
            <person name="Lander E.S."/>
            <person name="Nusbaum C."/>
        </authorList>
    </citation>
    <scope>NUCLEOTIDE SEQUENCE [LARGE SCALE GENOMIC DNA]</scope>
</reference>
<reference key="5">
    <citation type="submission" date="2005-09" db="EMBL/GenBank/DDBJ databases">
        <authorList>
            <person name="Mural R.J."/>
            <person name="Istrail S."/>
            <person name="Sutton G.G."/>
            <person name="Florea L."/>
            <person name="Halpern A.L."/>
            <person name="Mobarry C.M."/>
            <person name="Lippert R."/>
            <person name="Walenz B."/>
            <person name="Shatkay H."/>
            <person name="Dew I."/>
            <person name="Miller J.R."/>
            <person name="Flanigan M.J."/>
            <person name="Edwards N.J."/>
            <person name="Bolanos R."/>
            <person name="Fasulo D."/>
            <person name="Halldorsson B.V."/>
            <person name="Hannenhalli S."/>
            <person name="Turner R."/>
            <person name="Yooseph S."/>
            <person name="Lu F."/>
            <person name="Nusskern D.R."/>
            <person name="Shue B.C."/>
            <person name="Zheng X.H."/>
            <person name="Zhong F."/>
            <person name="Delcher A.L."/>
            <person name="Huson D.H."/>
            <person name="Kravitz S.A."/>
            <person name="Mouchard L."/>
            <person name="Reinert K."/>
            <person name="Remington K.A."/>
            <person name="Clark A.G."/>
            <person name="Waterman M.S."/>
            <person name="Eichler E.E."/>
            <person name="Adams M.D."/>
            <person name="Hunkapiller M.W."/>
            <person name="Myers E.W."/>
            <person name="Venter J.C."/>
        </authorList>
    </citation>
    <scope>NUCLEOTIDE SEQUENCE [LARGE SCALE GENOMIC DNA]</scope>
</reference>
<reference key="6">
    <citation type="journal article" date="2004" name="Genome Res.">
        <title>The status, quality, and expansion of the NIH full-length cDNA project: the Mammalian Gene Collection (MGC).</title>
        <authorList>
            <consortium name="The MGC Project Team"/>
        </authorList>
    </citation>
    <scope>NUCLEOTIDE SEQUENCE [LARGE SCALE MRNA] (ISOFORM 1)</scope>
    <source>
        <tissue>Kidney</tissue>
        <tissue>Skin</tissue>
    </source>
</reference>
<reference key="7">
    <citation type="journal article" date="2016" name="Traffic">
        <title>Sorting Nexin 11 Regulates Lysosomal Degradation of Plasma Membrane TRPV3.</title>
        <authorList>
            <person name="Li C."/>
            <person name="Ma W."/>
            <person name="Yin S."/>
            <person name="Liang X."/>
            <person name="Shu X."/>
            <person name="Pei D."/>
            <person name="Egan T.M."/>
            <person name="Huang J."/>
            <person name="Pan A."/>
            <person name="Li Z."/>
        </authorList>
    </citation>
    <scope>FUNCTION</scope>
    <scope>SUBCELLULAR LOCATION</scope>
    <scope>INTERACTION WITH TRPV3</scope>
</reference>
<reference key="8">
    <citation type="journal article" date="2013" name="J. Biol. Chem.">
        <title>Structure of Sorting Nexin 11 (SNX11) reveals a novel extended PX Domain (PXe Domain) critical for the inhibition of Sorting Nexin 10 (SNX10) induced vacuolation.</title>
        <authorList>
            <person name="Xu J."/>
            <person name="Xu T."/>
            <person name="Wu B."/>
            <person name="Ye Y."/>
            <person name="You X."/>
            <person name="Shu X."/>
            <person name="Pei D."/>
            <person name="Liu J."/>
        </authorList>
    </citation>
    <scope>X-RAY CRYSTALLOGRAPHY (1.60 ANGSTROMS) OF 7-170</scope>
    <scope>FUNCTION</scope>
    <scope>SUBUNIT</scope>
    <scope>LIPID-BINDING</scope>
    <scope>SUBCELLULAR LOCATION</scope>
    <scope>MUTAGENESIS OF ARG-59 AND 135-ILE--VAL-139</scope>
</reference>
<sequence>MGFWCRMSENQEQEEVITVRVQDPRVQNEGSWNSYVDYKIFLHTNSKAFTAKTSCVRRRYREFVWLRKQLQRNAGLVPVPELPGKSTFFGTSDEFIEKRRQGLQHFLEKVLQSVVLLSDSQLHLFLQSQLSVPEIEACVQGRSTMTVSDAILRYAMSNCGWAQEERQSSSHLAKGDQPKSCCFLPRSGRRSSPSPPPSEEKDHLEVWAPVVDSEVPSLESPTLPPLSSPLCCDFGRPKEGTSTLQSVRRAVGGDHAVPLDPGQLETVLEK</sequence>
<accession>Q9Y5W9</accession>
<accession>B3KRL6</accession>
<accession>B4DPY5</accession>
<accession>D3DTV0</accession>
<accession>Q53YC0</accession>
<accession>Q9H885</accession>
<proteinExistence type="evidence at protein level"/>
<evidence type="ECO:0000255" key="1">
    <source>
        <dbReference type="PROSITE-ProRule" id="PRU00147"/>
    </source>
</evidence>
<evidence type="ECO:0000256" key="2">
    <source>
        <dbReference type="SAM" id="MobiDB-lite"/>
    </source>
</evidence>
<evidence type="ECO:0000269" key="3">
    <source>
    </source>
</evidence>
<evidence type="ECO:0000269" key="4">
    <source>
    </source>
</evidence>
<evidence type="ECO:0000303" key="5">
    <source>
    </source>
</evidence>
<evidence type="ECO:0000305" key="6"/>
<evidence type="ECO:0007829" key="7">
    <source>
        <dbReference type="PDB" id="4IKB"/>
    </source>
</evidence>
<evidence type="ECO:0007829" key="8">
    <source>
        <dbReference type="PDB" id="4IKD"/>
    </source>
</evidence>
<evidence type="ECO:0007829" key="9">
    <source>
        <dbReference type="PDB" id="6KOI"/>
    </source>
</evidence>
<name>SNX11_HUMAN</name>